<keyword id="KW-0067">ATP-binding</keyword>
<keyword id="KW-0347">Helicase</keyword>
<keyword id="KW-0945">Host-virus interaction</keyword>
<keyword id="KW-0378">Hydrolase</keyword>
<keyword id="KW-1090">Inhibition of host innate immune response by virus</keyword>
<keyword id="KW-0547">Nucleotide-binding</keyword>
<keyword id="KW-0548">Nucleotidyltransferase</keyword>
<keyword id="KW-1159">RNA suppression of termination</keyword>
<keyword id="KW-0696">RNA-directed RNA polymerase</keyword>
<keyword id="KW-0941">Suppressor of RNA silencing</keyword>
<keyword id="KW-0808">Transferase</keyword>
<keyword id="KW-0899">Viral immunoevasion</keyword>
<keyword id="KW-0693">Viral RNA replication</keyword>
<evidence type="ECO:0000250" key="1"/>
<evidence type="ECO:0000250" key="2">
    <source>
        <dbReference type="UniProtKB" id="P03587"/>
    </source>
</evidence>
<evidence type="ECO:0000255" key="3">
    <source>
        <dbReference type="PROSITE-ProRule" id="PRU00539"/>
    </source>
</evidence>
<evidence type="ECO:0000255" key="4">
    <source>
        <dbReference type="PROSITE-ProRule" id="PRU00990"/>
    </source>
</evidence>
<evidence type="ECO:0000255" key="5">
    <source>
        <dbReference type="PROSITE-ProRule" id="PRU01079"/>
    </source>
</evidence>
<evidence type="ECO:0000269" key="6">
    <source>
    </source>
</evidence>
<evidence type="ECO:0000305" key="7"/>
<protein>
    <recommendedName>
        <fullName>Replicase large subunit</fullName>
        <ecNumber>2.1.1.-</ecNumber>
        <ecNumber>2.7.7.-</ecNumber>
        <ecNumber>2.7.7.48</ecNumber>
        <ecNumber>3.6.4.13</ecNumber>
    </recommendedName>
    <alternativeName>
        <fullName>183 kDa protein</fullName>
    </alternativeName>
    <alternativeName>
        <fullName>RNA-directed RNA polymerase</fullName>
    </alternativeName>
    <component>
        <recommendedName>
            <fullName>Replicase small subunit</fullName>
            <ecNumber>2.1.1.-</ecNumber>
            <ecNumber>2.7.7.-</ecNumber>
            <ecNumber>3.6.4.13</ecNumber>
        </recommendedName>
        <alternativeName>
            <fullName>126 kDa protein</fullName>
        </alternativeName>
        <alternativeName>
            <fullName>Methyltransferase/RNA helicase</fullName>
            <shortName>MT/HEL</shortName>
        </alternativeName>
    </component>
</protein>
<reference key="1">
    <citation type="journal article" date="1990" name="Virology">
        <title>The complete nucleotide sequence of the genomic RNA of the tobamovirus tobacco mild green mosaic virus.</title>
        <authorList>
            <person name="Solis I."/>
            <person name="Garcia-Arenal F."/>
        </authorList>
    </citation>
    <scope>NUCLEOTIDE SEQUENCE [GENOMIC RNA]</scope>
</reference>
<reference key="2">
    <citation type="journal article" date="2009" name="Proc. Natl. Acad. Sci. U.S.A.">
        <title>An inhibitory interaction between viral and cellular proteins underlies the resistance of tomato to nonadapted tobamoviruses.</title>
        <authorList>
            <person name="Ishibashi K."/>
            <person name="Naito S."/>
            <person name="Meshi T."/>
            <person name="Ishikawa M."/>
        </authorList>
    </citation>
    <scope>INTERACTION WITH HOST PROTEIN TM-1</scope>
    <scope>ACTIVITY REGULATION</scope>
</reference>
<proteinExistence type="evidence at protein level"/>
<accession>P18339</accession>
<accession>Q88596</accession>
<dbReference type="EC" id="2.1.1.-"/>
<dbReference type="EC" id="2.7.7.-"/>
<dbReference type="EC" id="2.7.7.48"/>
<dbReference type="EC" id="3.6.4.13"/>
<dbReference type="EMBL" id="M34077">
    <property type="protein sequence ID" value="AAA47934.2"/>
    <property type="molecule type" value="Genomic_RNA"/>
</dbReference>
<dbReference type="EMBL" id="M34077">
    <property type="protein sequence ID" value="AAA47935.1"/>
    <property type="molecule type" value="Genomic_RNA"/>
</dbReference>
<dbReference type="PIR" id="A35520">
    <property type="entry name" value="WMTMGM"/>
</dbReference>
<dbReference type="RefSeq" id="NP_062913.2">
    <property type="nucleotide sequence ID" value="NC_001556.1"/>
</dbReference>
<dbReference type="RefSeq" id="NP_062914.1">
    <property type="nucleotide sequence ID" value="NC_001556.1"/>
</dbReference>
<dbReference type="GeneID" id="1494074"/>
<dbReference type="GeneID" id="1494075"/>
<dbReference type="KEGG" id="vg:1494074"/>
<dbReference type="KEGG" id="vg:1494075"/>
<dbReference type="OrthoDB" id="1460at10239"/>
<dbReference type="Proteomes" id="UP000000281">
    <property type="component" value="Genome"/>
</dbReference>
<dbReference type="GO" id="GO:0005524">
    <property type="term" value="F:ATP binding"/>
    <property type="evidence" value="ECO:0007669"/>
    <property type="project" value="UniProtKB-KW"/>
</dbReference>
<dbReference type="GO" id="GO:0016887">
    <property type="term" value="F:ATP hydrolysis activity"/>
    <property type="evidence" value="ECO:0007669"/>
    <property type="project" value="RHEA"/>
</dbReference>
<dbReference type="GO" id="GO:0008174">
    <property type="term" value="F:mRNA methyltransferase activity"/>
    <property type="evidence" value="ECO:0007669"/>
    <property type="project" value="InterPro"/>
</dbReference>
<dbReference type="GO" id="GO:0003723">
    <property type="term" value="F:RNA binding"/>
    <property type="evidence" value="ECO:0007669"/>
    <property type="project" value="InterPro"/>
</dbReference>
<dbReference type="GO" id="GO:0003724">
    <property type="term" value="F:RNA helicase activity"/>
    <property type="evidence" value="ECO:0007669"/>
    <property type="project" value="UniProtKB-EC"/>
</dbReference>
<dbReference type="GO" id="GO:0003968">
    <property type="term" value="F:RNA-directed RNA polymerase activity"/>
    <property type="evidence" value="ECO:0007669"/>
    <property type="project" value="UniProtKB-KW"/>
</dbReference>
<dbReference type="GO" id="GO:0006351">
    <property type="term" value="P:DNA-templated transcription"/>
    <property type="evidence" value="ECO:0007669"/>
    <property type="project" value="InterPro"/>
</dbReference>
<dbReference type="GO" id="GO:0016556">
    <property type="term" value="P:mRNA modification"/>
    <property type="evidence" value="ECO:0007669"/>
    <property type="project" value="InterPro"/>
</dbReference>
<dbReference type="GO" id="GO:0006396">
    <property type="term" value="P:RNA processing"/>
    <property type="evidence" value="ECO:0007669"/>
    <property type="project" value="InterPro"/>
</dbReference>
<dbReference type="GO" id="GO:0052170">
    <property type="term" value="P:symbiont-mediated suppression of host innate immune response"/>
    <property type="evidence" value="ECO:0007669"/>
    <property type="project" value="UniProtKB-KW"/>
</dbReference>
<dbReference type="GO" id="GO:0039694">
    <property type="term" value="P:viral RNA genome replication"/>
    <property type="evidence" value="ECO:0007669"/>
    <property type="project" value="InterPro"/>
</dbReference>
<dbReference type="CDD" id="cd23251">
    <property type="entry name" value="Virgaviridae_RdRp"/>
    <property type="match status" value="1"/>
</dbReference>
<dbReference type="Gene3D" id="3.30.450.420">
    <property type="match status" value="1"/>
</dbReference>
<dbReference type="Gene3D" id="3.40.50.300">
    <property type="entry name" value="P-loop containing nucleotide triphosphate hydrolases"/>
    <property type="match status" value="2"/>
</dbReference>
<dbReference type="InterPro" id="IPR027351">
    <property type="entry name" value="(+)RNA_virus_helicase_core_dom"/>
</dbReference>
<dbReference type="InterPro" id="IPR002588">
    <property type="entry name" value="Alphavirus-like_MT_dom"/>
</dbReference>
<dbReference type="InterPro" id="IPR043502">
    <property type="entry name" value="DNA/RNA_pol_sf"/>
</dbReference>
<dbReference type="InterPro" id="IPR027417">
    <property type="entry name" value="P-loop_NTPase"/>
</dbReference>
<dbReference type="InterPro" id="IPR001788">
    <property type="entry name" value="RNA-dep_RNA_pol_alsuvir"/>
</dbReference>
<dbReference type="InterPro" id="IPR007094">
    <property type="entry name" value="RNA-dir_pol_PSvirus"/>
</dbReference>
<dbReference type="InterPro" id="IPR049329">
    <property type="entry name" value="ToMV_Hel_N"/>
</dbReference>
<dbReference type="InterPro" id="IPR047310">
    <property type="entry name" value="Virgaviridae_RdRp"/>
</dbReference>
<dbReference type="Pfam" id="PF00978">
    <property type="entry name" value="RdRP_2"/>
    <property type="match status" value="1"/>
</dbReference>
<dbReference type="Pfam" id="PF20896">
    <property type="entry name" value="ToMV_Hel_N"/>
    <property type="match status" value="1"/>
</dbReference>
<dbReference type="Pfam" id="PF01443">
    <property type="entry name" value="Viral_helicase1"/>
    <property type="match status" value="1"/>
</dbReference>
<dbReference type="Pfam" id="PF01660">
    <property type="entry name" value="Vmethyltransf"/>
    <property type="match status" value="1"/>
</dbReference>
<dbReference type="SUPFAM" id="SSF56672">
    <property type="entry name" value="DNA/RNA polymerases"/>
    <property type="match status" value="1"/>
</dbReference>
<dbReference type="PROSITE" id="PS51743">
    <property type="entry name" value="ALPHAVIRUS_MT"/>
    <property type="match status" value="1"/>
</dbReference>
<dbReference type="PROSITE" id="PS51657">
    <property type="entry name" value="PSRV_HELICASE"/>
    <property type="match status" value="1"/>
</dbReference>
<dbReference type="PROSITE" id="PS50507">
    <property type="entry name" value="RDRP_SSRNA_POS"/>
    <property type="match status" value="1"/>
</dbReference>
<sequence>MAHIQSIISNALLESVSGKNTLVNDLARRRMYDTAVEEFNARDRRPKVNFSKTISEEQTLLVSNAYPEFQITFYNTQNAVHSLAGGLRALELEYLMLQVPYGSPTYDIGGNFAAHLFKGRDYVHCCMPNLDIRDIMRHEGQKDSIEMYLSRLSRSNKVIPEFQREAFNRYAEAPNEVCCSKTFQDCRIHPPENSGRRYAVALHSLYDIPVHEFGAALISKNIHVCYAASILAEALLLDQTEVTLNEIGATFKREGDDVSFFFADESTLNYSHKYKNILHYVVKSYFPASSRIVYFKEFLVTRVNTWFCKFTKVDTYILYKSVRQVGCDSDQFYEAMEDAFAYKKTLAMFNTERAIFRDTASVNFWFPKMKDMVIVPLFEGSITSKKMTRSEVIVNRDFVYTVLNHIRTYQAKALTYQNVLSFVESIRSRVIINGVTARSEWDVDKAILQPLSMTFFLQTKLAALQDDIVMGKFRCLDKTTSELIWDEVGKFFGNVFPTIKERLVSRKILDVSENALKIKIPDLYVTWKDRFVAEYTKSEELPHLDIKKDLEEAEQMYDALSELSILKGADNFDIAKFKDMCKALDVSPDVAARVIVAVAENRSGLTLTFDKPTEENVAKALKSTASEAVVCLEPTSEEVNVNKFSIAEKGRLPVCAESHGLTNANLEHQELESLNDFHKACVDSVITKQMASVVYTGSLKVQQMKNYVDSLAASLSATVSNLCKSLKDEVGYDSDSREKVGVWDVTLKKWLLKPAAKGHSWGVVLDYKGKMFTALLSYEGDRMVTESDWRRVAVSSDTMVYSDIAKLQNLRKTMRDGEPHEPTAKMVLVDGVPGCGKYKGDFERFDLDEDLILVPGKQAAAMIRRRANSSGLIRATMDNVRTVDSLLMHPKPRSHKRLFIDEGLMLHTGCVNFLVLISGCDIAYIYGDTQQIPFINRVQNFPYPKHFEKLQVDEVEMRRTTLRCPGDVNFFLQSKYEGAVTTTSTVQRSVSSEMIGGKGVLNSVSKPLKGKIVTFTQADKFELEEKGYKNVNTVHEIQGETFEDVSLVRLTATPLTLISKSSPHVLVALTRHTKSFKYYTVVLDPLVQIISDLSSLSSFLLEMYMVEAGSRXQLQMDAVFKGHNLFVATPKSGDFPDLQFYYDVCLPGNSTILNKYDAVTMRLRDNSLNVKDCVLDFSKSIPMPKEVKPCLEPVLRTAAEPPRAAGLLENLVAMIKRNFNAPDLTGTIDIESTASVVVDKFFDSYFIKKEKYTKNIAGVMTKDSMMRWLENRKEVLLDDLANYNFTDLPAIDQYKHMIKAQPKQKLDLSIQNEYPALQTIVYHSKQINGILAGFSELTRLLLEAFDSKKFLFFTRKTPEQIQEFFSDLDSHVPMDVLELDISKYDKSQNEFHCAVEYEIWKRLGLNEFLAEVWKQGHRKTTLKDYIAGIKTCLWYQRKSGDVTTFIGNTVIIAACLGSMLPMEKVIKGAFCGDDSVLYFPKGLDFPDIQSCANLMWNFEAKLYRKRYGYFCGRYIIHHDKGAIVYYDPLKLISKLGAKHIKDYDHLEELRVSLCDVACSLGNWCLGFPQLNAAIKEVHKTAIDGSFAFNCVNKFLCDKFLFRTLFLNGC</sequence>
<feature type="chain" id="PRO_0000041186" description="Replicase large subunit">
    <location>
        <begin position="1"/>
        <end position="1609"/>
    </location>
</feature>
<feature type="chain" id="PRO_0000041187" description="Replicase small subunit">
    <location>
        <begin position="1"/>
        <end position="1111"/>
    </location>
</feature>
<feature type="domain" description="Alphavirus-like MT" evidence="5">
    <location>
        <begin position="72"/>
        <end position="281"/>
    </location>
</feature>
<feature type="domain" description="(+)RNA virus helicase ATP-binding" evidence="4">
    <location>
        <begin position="799"/>
        <end position="958"/>
    </location>
</feature>
<feature type="domain" description="(+)RNA virus helicase C-terminal" evidence="4">
    <location>
        <begin position="959"/>
        <end position="1111"/>
    </location>
</feature>
<feature type="domain" description="RdRp catalytic" evidence="3">
    <location>
        <begin position="1374"/>
        <end position="1487"/>
    </location>
</feature>
<feature type="region of interest" description="Methyltransferase">
    <location>
        <begin position="50"/>
        <end position="453"/>
    </location>
</feature>
<feature type="region of interest" description="Helicase">
    <location>
        <begin position="828"/>
        <end position="1080"/>
    </location>
</feature>
<feature type="binding site" evidence="2 4">
    <location>
        <begin position="834"/>
        <end position="839"/>
    </location>
    <ligand>
        <name>ATP</name>
        <dbReference type="ChEBI" id="CHEBI:30616"/>
    </ligand>
</feature>
<feature type="binding site" evidence="2">
    <location>
        <position position="866"/>
    </location>
    <ligand>
        <name>ATP</name>
        <dbReference type="ChEBI" id="CHEBI:30616"/>
    </ligand>
</feature>
<feature type="binding site" evidence="2">
    <location>
        <begin position="962"/>
        <end position="963"/>
    </location>
    <ligand>
        <name>ATP</name>
        <dbReference type="ChEBI" id="CHEBI:30616"/>
    </ligand>
</feature>
<feature type="binding site" evidence="2">
    <location>
        <position position="1071"/>
    </location>
    <ligand>
        <name>ATP</name>
        <dbReference type="ChEBI" id="CHEBI:30616"/>
    </ligand>
</feature>
<feature type="binding site" evidence="2">
    <location>
        <begin position="1092"/>
        <end position="1095"/>
    </location>
    <ligand>
        <name>ATP</name>
        <dbReference type="ChEBI" id="CHEBI:30616"/>
    </ligand>
</feature>
<organismHost>
    <name type="scientific">Capsicum annuum</name>
    <name type="common">Capsicum pepper</name>
    <dbReference type="NCBI Taxonomy" id="4072"/>
</organismHost>
<organismHost>
    <name type="scientific">Eryngium planum</name>
    <dbReference type="NCBI Taxonomy" id="43071"/>
</organismHost>
<organismHost>
    <name type="scientific">Nicotiana glauca</name>
    <name type="common">Glaucous tobacco</name>
    <name type="synonym">Tree tobacco</name>
    <dbReference type="NCBI Taxonomy" id="4090"/>
</organismHost>
<organismHost>
    <name type="scientific">Nicotiana tabacum</name>
    <name type="common">Common tobacco</name>
    <dbReference type="NCBI Taxonomy" id="4097"/>
</organismHost>
<name>RDRP_TMGMV</name>
<organism>
    <name type="scientific">Tobacco mild green mosaic virus</name>
    <name type="common">TMGMV</name>
    <name type="synonym">TMV strain U2</name>
    <dbReference type="NCBI Taxonomy" id="12241"/>
    <lineage>
        <taxon>Viruses</taxon>
        <taxon>Riboviria</taxon>
        <taxon>Orthornavirae</taxon>
        <taxon>Kitrinoviricota</taxon>
        <taxon>Alsuviricetes</taxon>
        <taxon>Martellivirales</taxon>
        <taxon>Virgaviridae</taxon>
        <taxon>Tobamovirus</taxon>
    </lineage>
</organism>
<comment type="function">
    <molecule>Replicase large subunit</molecule>
    <text>Is an RNA-dependent RNA polymerase active in viral RNA replication.</text>
</comment>
<comment type="function">
    <molecule>Replicase small subunit</molecule>
    <text evidence="1 7">Is a methyltransferase active in RNA capping and an RNA helicase. Methyltransferase displays a cytoplasmic capping enzyme activity. This function is necessary since all viral RNAs are synthesized in the cytoplasm, and host capping enzymes are restricted to the nucleus. Helicase region probably exhibits NTPase and RNA unwinding activities (Potential). It also acts as a suppressor of RNA-mediated gene silencing, also known as post-transcriptional gene silencing (PTGS), a mechanism of plant viral defense that limits the accumulation of viral RNAs. May mediate silencing suppression through either inhibition of HEN1-mediated siRNA or siRNA demethylation (By similarity).</text>
</comment>
<comment type="catalytic activity">
    <reaction evidence="3">
        <text>RNA(n) + a ribonucleoside 5'-triphosphate = RNA(n+1) + diphosphate</text>
        <dbReference type="Rhea" id="RHEA:21248"/>
        <dbReference type="Rhea" id="RHEA-COMP:14527"/>
        <dbReference type="Rhea" id="RHEA-COMP:17342"/>
        <dbReference type="ChEBI" id="CHEBI:33019"/>
        <dbReference type="ChEBI" id="CHEBI:61557"/>
        <dbReference type="ChEBI" id="CHEBI:140395"/>
        <dbReference type="EC" id="2.7.7.48"/>
    </reaction>
</comment>
<comment type="catalytic activity">
    <reaction>
        <text>ATP + H2O = ADP + phosphate + H(+)</text>
        <dbReference type="Rhea" id="RHEA:13065"/>
        <dbReference type="ChEBI" id="CHEBI:15377"/>
        <dbReference type="ChEBI" id="CHEBI:15378"/>
        <dbReference type="ChEBI" id="CHEBI:30616"/>
        <dbReference type="ChEBI" id="CHEBI:43474"/>
        <dbReference type="ChEBI" id="CHEBI:456216"/>
        <dbReference type="EC" id="3.6.4.13"/>
    </reaction>
</comment>
<comment type="activity regulation">
    <text evidence="6">In resistant plants, is bound by host protein Tm-1 (e.g tomato Tm-1 AC A7M6E7), thereby inhibiting replication complex activity.</text>
</comment>
<comment type="subunit">
    <text evidence="1 6">Heterodimer of a large and a small subunit (By similarity). Both large and small subunits interact, via an ATP bridge, with host protein Tm-1 (e.g. tomato Tm-1 AC A7M6E7 and AC A7M6E8) (PubMed:19423673).</text>
</comment>
<comment type="miscellaneous">
    <text>This protein is translated as a fusion protein by episodic readthrough of a termination codon. When readthrough of the terminator codon TGA occurs between the codons for Arg-1111 and Gln-1113, this results in the addition of the RdRp region to the replicase.</text>
</comment>
<comment type="similarity">
    <text evidence="7">Belongs to the ssRNA positive-strand viruses RNA-directed RNA polymerase family.</text>
</comment>